<accession>B0BRS8</accession>
<proteinExistence type="inferred from homology"/>
<comment type="function">
    <text evidence="1">This protein is involved in the repair of mismatches in DNA. It is possible that it carries out the mismatch recognition step. This protein has a weak ATPase activity.</text>
</comment>
<comment type="similarity">
    <text evidence="1">Belongs to the DNA mismatch repair MutS family.</text>
</comment>
<feature type="chain" id="PRO_0000335103" description="DNA mismatch repair protein MutS">
    <location>
        <begin position="1"/>
        <end position="864"/>
    </location>
</feature>
<feature type="binding site" evidence="1">
    <location>
        <begin position="613"/>
        <end position="620"/>
    </location>
    <ligand>
        <name>ATP</name>
        <dbReference type="ChEBI" id="CHEBI:30616"/>
    </ligand>
</feature>
<dbReference type="EMBL" id="CP000687">
    <property type="protein sequence ID" value="ABY70187.1"/>
    <property type="molecule type" value="Genomic_DNA"/>
</dbReference>
<dbReference type="RefSeq" id="WP_012263308.1">
    <property type="nucleotide sequence ID" value="NC_010278.1"/>
</dbReference>
<dbReference type="SMR" id="B0BRS8"/>
<dbReference type="KEGG" id="apj:APJL_1635"/>
<dbReference type="HOGENOM" id="CLU_002472_4_0_6"/>
<dbReference type="Proteomes" id="UP000008547">
    <property type="component" value="Chromosome"/>
</dbReference>
<dbReference type="GO" id="GO:0005829">
    <property type="term" value="C:cytosol"/>
    <property type="evidence" value="ECO:0007669"/>
    <property type="project" value="TreeGrafter"/>
</dbReference>
<dbReference type="GO" id="GO:0005524">
    <property type="term" value="F:ATP binding"/>
    <property type="evidence" value="ECO:0007669"/>
    <property type="project" value="UniProtKB-UniRule"/>
</dbReference>
<dbReference type="GO" id="GO:0140664">
    <property type="term" value="F:ATP-dependent DNA damage sensor activity"/>
    <property type="evidence" value="ECO:0007669"/>
    <property type="project" value="InterPro"/>
</dbReference>
<dbReference type="GO" id="GO:0003684">
    <property type="term" value="F:damaged DNA binding"/>
    <property type="evidence" value="ECO:0007669"/>
    <property type="project" value="UniProtKB-UniRule"/>
</dbReference>
<dbReference type="GO" id="GO:0030983">
    <property type="term" value="F:mismatched DNA binding"/>
    <property type="evidence" value="ECO:0007669"/>
    <property type="project" value="InterPro"/>
</dbReference>
<dbReference type="GO" id="GO:0006298">
    <property type="term" value="P:mismatch repair"/>
    <property type="evidence" value="ECO:0007669"/>
    <property type="project" value="UniProtKB-UniRule"/>
</dbReference>
<dbReference type="CDD" id="cd03284">
    <property type="entry name" value="ABC_MutS1"/>
    <property type="match status" value="1"/>
</dbReference>
<dbReference type="FunFam" id="1.10.1420.10:FF:000002">
    <property type="entry name" value="DNA mismatch repair protein MutS"/>
    <property type="match status" value="1"/>
</dbReference>
<dbReference type="FunFam" id="3.40.1170.10:FF:000001">
    <property type="entry name" value="DNA mismatch repair protein MutS"/>
    <property type="match status" value="1"/>
</dbReference>
<dbReference type="FunFam" id="3.40.50.300:FF:000283">
    <property type="entry name" value="DNA mismatch repair protein MutS"/>
    <property type="match status" value="1"/>
</dbReference>
<dbReference type="Gene3D" id="1.10.1420.10">
    <property type="match status" value="2"/>
</dbReference>
<dbReference type="Gene3D" id="6.10.140.430">
    <property type="match status" value="1"/>
</dbReference>
<dbReference type="Gene3D" id="3.40.1170.10">
    <property type="entry name" value="DNA repair protein MutS, domain I"/>
    <property type="match status" value="1"/>
</dbReference>
<dbReference type="Gene3D" id="3.30.420.110">
    <property type="entry name" value="MutS, connector domain"/>
    <property type="match status" value="1"/>
</dbReference>
<dbReference type="Gene3D" id="3.40.50.300">
    <property type="entry name" value="P-loop containing nucleotide triphosphate hydrolases"/>
    <property type="match status" value="1"/>
</dbReference>
<dbReference type="HAMAP" id="MF_00096">
    <property type="entry name" value="MutS"/>
    <property type="match status" value="1"/>
</dbReference>
<dbReference type="InterPro" id="IPR005748">
    <property type="entry name" value="DNA_mismatch_repair_MutS"/>
</dbReference>
<dbReference type="InterPro" id="IPR007695">
    <property type="entry name" value="DNA_mismatch_repair_MutS-lik_N"/>
</dbReference>
<dbReference type="InterPro" id="IPR017261">
    <property type="entry name" value="DNA_mismatch_repair_MutS/MSH"/>
</dbReference>
<dbReference type="InterPro" id="IPR000432">
    <property type="entry name" value="DNA_mismatch_repair_MutS_C"/>
</dbReference>
<dbReference type="InterPro" id="IPR007861">
    <property type="entry name" value="DNA_mismatch_repair_MutS_clamp"/>
</dbReference>
<dbReference type="InterPro" id="IPR007696">
    <property type="entry name" value="DNA_mismatch_repair_MutS_core"/>
</dbReference>
<dbReference type="InterPro" id="IPR016151">
    <property type="entry name" value="DNA_mismatch_repair_MutS_N"/>
</dbReference>
<dbReference type="InterPro" id="IPR036187">
    <property type="entry name" value="DNA_mismatch_repair_MutS_sf"/>
</dbReference>
<dbReference type="InterPro" id="IPR007860">
    <property type="entry name" value="DNA_mmatch_repair_MutS_con_dom"/>
</dbReference>
<dbReference type="InterPro" id="IPR045076">
    <property type="entry name" value="MutS"/>
</dbReference>
<dbReference type="InterPro" id="IPR036678">
    <property type="entry name" value="MutS_con_dom_sf"/>
</dbReference>
<dbReference type="InterPro" id="IPR027417">
    <property type="entry name" value="P-loop_NTPase"/>
</dbReference>
<dbReference type="NCBIfam" id="TIGR01070">
    <property type="entry name" value="mutS1"/>
    <property type="match status" value="1"/>
</dbReference>
<dbReference type="NCBIfam" id="NF003810">
    <property type="entry name" value="PRK05399.1"/>
    <property type="match status" value="1"/>
</dbReference>
<dbReference type="PANTHER" id="PTHR11361:SF34">
    <property type="entry name" value="DNA MISMATCH REPAIR PROTEIN MSH1, MITOCHONDRIAL"/>
    <property type="match status" value="1"/>
</dbReference>
<dbReference type="PANTHER" id="PTHR11361">
    <property type="entry name" value="DNA MISMATCH REPAIR PROTEIN MUTS FAMILY MEMBER"/>
    <property type="match status" value="1"/>
</dbReference>
<dbReference type="Pfam" id="PF01624">
    <property type="entry name" value="MutS_I"/>
    <property type="match status" value="1"/>
</dbReference>
<dbReference type="Pfam" id="PF05188">
    <property type="entry name" value="MutS_II"/>
    <property type="match status" value="1"/>
</dbReference>
<dbReference type="Pfam" id="PF05192">
    <property type="entry name" value="MutS_III"/>
    <property type="match status" value="1"/>
</dbReference>
<dbReference type="Pfam" id="PF05190">
    <property type="entry name" value="MutS_IV"/>
    <property type="match status" value="1"/>
</dbReference>
<dbReference type="Pfam" id="PF00488">
    <property type="entry name" value="MutS_V"/>
    <property type="match status" value="1"/>
</dbReference>
<dbReference type="PIRSF" id="PIRSF037677">
    <property type="entry name" value="DNA_mis_repair_Msh6"/>
    <property type="match status" value="1"/>
</dbReference>
<dbReference type="SMART" id="SM00534">
    <property type="entry name" value="MUTSac"/>
    <property type="match status" value="1"/>
</dbReference>
<dbReference type="SMART" id="SM00533">
    <property type="entry name" value="MUTSd"/>
    <property type="match status" value="1"/>
</dbReference>
<dbReference type="SUPFAM" id="SSF55271">
    <property type="entry name" value="DNA repair protein MutS, domain I"/>
    <property type="match status" value="1"/>
</dbReference>
<dbReference type="SUPFAM" id="SSF53150">
    <property type="entry name" value="DNA repair protein MutS, domain II"/>
    <property type="match status" value="1"/>
</dbReference>
<dbReference type="SUPFAM" id="SSF48334">
    <property type="entry name" value="DNA repair protein MutS, domain III"/>
    <property type="match status" value="1"/>
</dbReference>
<dbReference type="SUPFAM" id="SSF52540">
    <property type="entry name" value="P-loop containing nucleoside triphosphate hydrolases"/>
    <property type="match status" value="1"/>
</dbReference>
<dbReference type="PROSITE" id="PS00486">
    <property type="entry name" value="DNA_MISMATCH_REPAIR_2"/>
    <property type="match status" value="1"/>
</dbReference>
<organism>
    <name type="scientific">Actinobacillus pleuropneumoniae serotype 3 (strain JL03)</name>
    <dbReference type="NCBI Taxonomy" id="434271"/>
    <lineage>
        <taxon>Bacteria</taxon>
        <taxon>Pseudomonadati</taxon>
        <taxon>Pseudomonadota</taxon>
        <taxon>Gammaproteobacteria</taxon>
        <taxon>Pasteurellales</taxon>
        <taxon>Pasteurellaceae</taxon>
        <taxon>Actinobacillus</taxon>
    </lineage>
</organism>
<name>MUTS_ACTPJ</name>
<reference key="1">
    <citation type="journal article" date="2008" name="PLoS ONE">
        <title>Genome biology of Actinobacillus pleuropneumoniae JL03, an isolate of serotype 3 prevalent in China.</title>
        <authorList>
            <person name="Xu Z."/>
            <person name="Zhou Y."/>
            <person name="Li L."/>
            <person name="Zhou R."/>
            <person name="Xiao S."/>
            <person name="Wan Y."/>
            <person name="Zhang S."/>
            <person name="Wang K."/>
            <person name="Li W."/>
            <person name="Li L."/>
            <person name="Jin H."/>
            <person name="Kang M."/>
            <person name="Dalai B."/>
            <person name="Li T."/>
            <person name="Liu L."/>
            <person name="Cheng Y."/>
            <person name="Zhang L."/>
            <person name="Xu T."/>
            <person name="Zheng H."/>
            <person name="Pu S."/>
            <person name="Wang B."/>
            <person name="Gu W."/>
            <person name="Zhang X.L."/>
            <person name="Zhu G.-F."/>
            <person name="Wang S."/>
            <person name="Zhao G.-P."/>
            <person name="Chen H."/>
        </authorList>
    </citation>
    <scope>NUCLEOTIDE SEQUENCE [LARGE SCALE GENOMIC DNA]</scope>
    <source>
        <strain>JL03</strain>
    </source>
</reference>
<sequence length="864" mass="95612">MTQDLSKHTPMMAQYLQLKAQNPDILLFYRMGDFYELFYDDAKKAAALLDISLTKRGASAGEPIPMAGVPYHAVEGYLAKLVSLGESVAICEQIGDPATSKGPVERKVVRIVTPGTVSDEALLPERQDNLVAAIYEEKGVFAIATLDMTSGRFLITELPNKEALAAELQRLQLAEILYAEDFSAAEILNNYKGLRRRPVWEFELVTAINLLNRQFGTQSLAGFGVEKAVVALCAAGCVLHYAQETQRTALPHINSIHLAQNSDTVLLDAATRRNLELTQNLAGGTENTLAAVLDKCVTPMGSRLLKRWIHQPIRDLEKLKKRQDIIDTLQKEQRIEPLQPLLQNVGDMERILARVALRSARPRDLTRLRTALAQLPDIAKNAKNLTASLDALVAQIGDFSELHALLERAIIETPPQLIRDGGVIAEGYNAELDEWRELSAGATQYLENLEIREREATGIDTLKIGFNAVHGYYIQISQGQAHKAPMHYVRRQTLKNAERYIIPELKTYEDKVLKAKGASLALEKQLYDELFDLLMPRLGEMQLAAMALSELDVLTNLAERAESLNYVRPTFSLQRGVNIKGGRHPVVEQVLKDPFIANPVFLNAQRHLLVVTGPNMGGKSTYMRQIALISLMAYIGSFVPADSAEIGALDRIFTRIGASDDLASGRSTFMVEMTEMANILHQATENSLVLIDEIGRGTSTYDGLSLAWACAEWLAKKTQSLTLFATHYFELTSLPSQLKGVANVHLDAREHQDSIVFMHSVQEGAASKSYGLAVAALAGVPKQVIQLAKQRLAHLEEISLQTKEAHDNPQGDLLFAADLQETPQIQPLVAQQSELEKALMSIDPDELTPRQALEALYRLKKLMA</sequence>
<keyword id="KW-0067">ATP-binding</keyword>
<keyword id="KW-0227">DNA damage</keyword>
<keyword id="KW-0234">DNA repair</keyword>
<keyword id="KW-0238">DNA-binding</keyword>
<keyword id="KW-0547">Nucleotide-binding</keyword>
<evidence type="ECO:0000255" key="1">
    <source>
        <dbReference type="HAMAP-Rule" id="MF_00096"/>
    </source>
</evidence>
<gene>
    <name evidence="1" type="primary">mutS</name>
    <name type="ordered locus">APJL_1635</name>
</gene>
<protein>
    <recommendedName>
        <fullName evidence="1">DNA mismatch repair protein MutS</fullName>
    </recommendedName>
</protein>